<protein>
    <recommendedName>
        <fullName evidence="1">GTPase Der</fullName>
    </recommendedName>
    <alternativeName>
        <fullName evidence="1">GTP-binding protein EngA</fullName>
    </alternativeName>
</protein>
<keyword id="KW-0342">GTP-binding</keyword>
<keyword id="KW-0547">Nucleotide-binding</keyword>
<keyword id="KW-0677">Repeat</keyword>
<keyword id="KW-0690">Ribosome biogenesis</keyword>
<evidence type="ECO:0000255" key="1">
    <source>
        <dbReference type="HAMAP-Rule" id="MF_00195"/>
    </source>
</evidence>
<accession>B3PVJ6</accession>
<feature type="chain" id="PRO_1000099153" description="GTPase Der">
    <location>
        <begin position="1"/>
        <end position="473"/>
    </location>
</feature>
<feature type="domain" description="EngA-type G 1">
    <location>
        <begin position="3"/>
        <end position="167"/>
    </location>
</feature>
<feature type="domain" description="EngA-type G 2">
    <location>
        <begin position="203"/>
        <end position="378"/>
    </location>
</feature>
<feature type="domain" description="KH-like" evidence="1">
    <location>
        <begin position="379"/>
        <end position="463"/>
    </location>
</feature>
<feature type="binding site" evidence="1">
    <location>
        <begin position="9"/>
        <end position="16"/>
    </location>
    <ligand>
        <name>GTP</name>
        <dbReference type="ChEBI" id="CHEBI:37565"/>
        <label>1</label>
    </ligand>
</feature>
<feature type="binding site" evidence="1">
    <location>
        <begin position="56"/>
        <end position="60"/>
    </location>
    <ligand>
        <name>GTP</name>
        <dbReference type="ChEBI" id="CHEBI:37565"/>
        <label>1</label>
    </ligand>
</feature>
<feature type="binding site" evidence="1">
    <location>
        <begin position="119"/>
        <end position="122"/>
    </location>
    <ligand>
        <name>GTP</name>
        <dbReference type="ChEBI" id="CHEBI:37565"/>
        <label>1</label>
    </ligand>
</feature>
<feature type="binding site" evidence="1">
    <location>
        <begin position="209"/>
        <end position="216"/>
    </location>
    <ligand>
        <name>GTP</name>
        <dbReference type="ChEBI" id="CHEBI:37565"/>
        <label>2</label>
    </ligand>
</feature>
<feature type="binding site" evidence="1">
    <location>
        <begin position="256"/>
        <end position="260"/>
    </location>
    <ligand>
        <name>GTP</name>
        <dbReference type="ChEBI" id="CHEBI:37565"/>
        <label>2</label>
    </ligand>
</feature>
<feature type="binding site" evidence="1">
    <location>
        <begin position="321"/>
        <end position="324"/>
    </location>
    <ligand>
        <name>GTP</name>
        <dbReference type="ChEBI" id="CHEBI:37565"/>
        <label>2</label>
    </ligand>
</feature>
<organism>
    <name type="scientific">Rhizobium etli (strain CIAT 652)</name>
    <dbReference type="NCBI Taxonomy" id="491916"/>
    <lineage>
        <taxon>Bacteria</taxon>
        <taxon>Pseudomonadati</taxon>
        <taxon>Pseudomonadota</taxon>
        <taxon>Alphaproteobacteria</taxon>
        <taxon>Hyphomicrobiales</taxon>
        <taxon>Rhizobiaceae</taxon>
        <taxon>Rhizobium/Agrobacterium group</taxon>
        <taxon>Rhizobium</taxon>
    </lineage>
</organism>
<proteinExistence type="inferred from homology"/>
<gene>
    <name evidence="1" type="primary">der</name>
    <name type="synonym">engA</name>
    <name type="ordered locus">RHECIAT_CH0003268</name>
</gene>
<name>DER_RHIE6</name>
<sequence>MSFTVAIVGRPNVGKSTLFNRLVGKKLALVDDTPGVTRDRRPGDARLMGLTFTIIDTAGLEEADEESLQGRMRAQTEAAIDEADLSLFVVDAKNGLTPVDTALAEMLRRRGKPVVLVANKSEARGSDSGFYDAYTLGLGEPTPISAEHGQGMIDLRDAIVAAIGKDRAYAKEDVAVTDVDIPPSESEADGEDEEPVYDDTKPLRVAIVGRPNAGKSTLINRFLGEDRLLTGPEAGITRDSISVEWDWRGRTIKMFDTAGMRRKARVTEKLEKLSVADALRAIRFAETVVIVFDATIPFEKQDLQIVDLVLREGRAAVLAFNKWDMIEDRQAVLADLREKTDRLLPQARGIRAVPISGQTGWGLDKLMQSIIDTDRVWNKRISTARLNRWLETQQIQHPPPAVSGRRIKLKYMTQVKARPPAFMISCTRSDALPESYTRYLINGLRADFDMPSVPIRIHFRSAENPYESKKKRT</sequence>
<comment type="function">
    <text evidence="1">GTPase that plays an essential role in the late steps of ribosome biogenesis.</text>
</comment>
<comment type="subunit">
    <text evidence="1">Associates with the 50S ribosomal subunit.</text>
</comment>
<comment type="similarity">
    <text evidence="1">Belongs to the TRAFAC class TrmE-Era-EngA-EngB-Septin-like GTPase superfamily. EngA (Der) GTPase family.</text>
</comment>
<dbReference type="EMBL" id="CP001074">
    <property type="protein sequence ID" value="ACE92216.1"/>
    <property type="molecule type" value="Genomic_DNA"/>
</dbReference>
<dbReference type="SMR" id="B3PVJ6"/>
<dbReference type="KEGG" id="rec:RHECIAT_CH0003268"/>
<dbReference type="eggNOG" id="COG1160">
    <property type="taxonomic scope" value="Bacteria"/>
</dbReference>
<dbReference type="HOGENOM" id="CLU_016077_5_0_5"/>
<dbReference type="Proteomes" id="UP000008817">
    <property type="component" value="Chromosome"/>
</dbReference>
<dbReference type="GO" id="GO:0005525">
    <property type="term" value="F:GTP binding"/>
    <property type="evidence" value="ECO:0007669"/>
    <property type="project" value="UniProtKB-UniRule"/>
</dbReference>
<dbReference type="GO" id="GO:0042254">
    <property type="term" value="P:ribosome biogenesis"/>
    <property type="evidence" value="ECO:0007669"/>
    <property type="project" value="UniProtKB-KW"/>
</dbReference>
<dbReference type="CDD" id="cd01894">
    <property type="entry name" value="EngA1"/>
    <property type="match status" value="1"/>
</dbReference>
<dbReference type="CDD" id="cd01895">
    <property type="entry name" value="EngA2"/>
    <property type="match status" value="1"/>
</dbReference>
<dbReference type="FunFam" id="3.30.300.20:FF:000004">
    <property type="entry name" value="GTPase Der"/>
    <property type="match status" value="1"/>
</dbReference>
<dbReference type="FunFam" id="3.40.50.300:FF:000057">
    <property type="entry name" value="GTPase Der"/>
    <property type="match status" value="1"/>
</dbReference>
<dbReference type="Gene3D" id="3.30.300.20">
    <property type="match status" value="1"/>
</dbReference>
<dbReference type="Gene3D" id="3.40.50.300">
    <property type="entry name" value="P-loop containing nucleotide triphosphate hydrolases"/>
    <property type="match status" value="2"/>
</dbReference>
<dbReference type="HAMAP" id="MF_00195">
    <property type="entry name" value="GTPase_Der"/>
    <property type="match status" value="1"/>
</dbReference>
<dbReference type="InterPro" id="IPR031166">
    <property type="entry name" value="G_ENGA"/>
</dbReference>
<dbReference type="InterPro" id="IPR006073">
    <property type="entry name" value="GTP-bd"/>
</dbReference>
<dbReference type="InterPro" id="IPR016484">
    <property type="entry name" value="GTPase_Der"/>
</dbReference>
<dbReference type="InterPro" id="IPR032859">
    <property type="entry name" value="KH_dom-like"/>
</dbReference>
<dbReference type="InterPro" id="IPR015946">
    <property type="entry name" value="KH_dom-like_a/b"/>
</dbReference>
<dbReference type="InterPro" id="IPR027417">
    <property type="entry name" value="P-loop_NTPase"/>
</dbReference>
<dbReference type="InterPro" id="IPR005225">
    <property type="entry name" value="Small_GTP-bd"/>
</dbReference>
<dbReference type="NCBIfam" id="TIGR03594">
    <property type="entry name" value="GTPase_EngA"/>
    <property type="match status" value="1"/>
</dbReference>
<dbReference type="NCBIfam" id="TIGR00231">
    <property type="entry name" value="small_GTP"/>
    <property type="match status" value="2"/>
</dbReference>
<dbReference type="PANTHER" id="PTHR43834">
    <property type="entry name" value="GTPASE DER"/>
    <property type="match status" value="1"/>
</dbReference>
<dbReference type="PANTHER" id="PTHR43834:SF6">
    <property type="entry name" value="GTPASE DER"/>
    <property type="match status" value="1"/>
</dbReference>
<dbReference type="Pfam" id="PF14714">
    <property type="entry name" value="KH_dom-like"/>
    <property type="match status" value="1"/>
</dbReference>
<dbReference type="Pfam" id="PF01926">
    <property type="entry name" value="MMR_HSR1"/>
    <property type="match status" value="2"/>
</dbReference>
<dbReference type="PIRSF" id="PIRSF006485">
    <property type="entry name" value="GTP-binding_EngA"/>
    <property type="match status" value="1"/>
</dbReference>
<dbReference type="PRINTS" id="PR00326">
    <property type="entry name" value="GTP1OBG"/>
</dbReference>
<dbReference type="SUPFAM" id="SSF52540">
    <property type="entry name" value="P-loop containing nucleoside triphosphate hydrolases"/>
    <property type="match status" value="2"/>
</dbReference>
<dbReference type="PROSITE" id="PS51712">
    <property type="entry name" value="G_ENGA"/>
    <property type="match status" value="2"/>
</dbReference>
<reference key="1">
    <citation type="journal article" date="2010" name="Appl. Environ. Microbiol.">
        <title>Conserved symbiotic plasmid DNA sequences in the multireplicon pangenomic structure of Rhizobium etli.</title>
        <authorList>
            <person name="Gonzalez V."/>
            <person name="Acosta J.L."/>
            <person name="Santamaria R.I."/>
            <person name="Bustos P."/>
            <person name="Fernandez J.L."/>
            <person name="Hernandez Gonzalez I.L."/>
            <person name="Diaz R."/>
            <person name="Flores M."/>
            <person name="Palacios R."/>
            <person name="Mora J."/>
            <person name="Davila G."/>
        </authorList>
    </citation>
    <scope>NUCLEOTIDE SEQUENCE [LARGE SCALE GENOMIC DNA]</scope>
    <source>
        <strain>CIAT 652</strain>
    </source>
</reference>